<gene>
    <name type="ordered locus">MAP_3385</name>
</gene>
<proteinExistence type="inferred from homology"/>
<comment type="function">
    <text evidence="1">Exhibits S-adenosyl-L-methionine-dependent methyltransferase activity.</text>
</comment>
<comment type="similarity">
    <text evidence="2">Belongs to the UPF0677 family.</text>
</comment>
<feature type="chain" id="PRO_0000361179" description="Putative S-adenosyl-L-methionine-dependent methyltransferase MAP_3385">
    <location>
        <begin position="1"/>
        <end position="304"/>
    </location>
</feature>
<feature type="binding site" evidence="1">
    <location>
        <position position="129"/>
    </location>
    <ligand>
        <name>S-adenosyl-L-methionine</name>
        <dbReference type="ChEBI" id="CHEBI:59789"/>
    </ligand>
</feature>
<feature type="binding site" evidence="1">
    <location>
        <begin position="158"/>
        <end position="159"/>
    </location>
    <ligand>
        <name>S-adenosyl-L-methionine</name>
        <dbReference type="ChEBI" id="CHEBI:59789"/>
    </ligand>
</feature>
<organism>
    <name type="scientific">Mycolicibacterium paratuberculosis (strain ATCC BAA-968 / K-10)</name>
    <name type="common">Mycobacterium paratuberculosis</name>
    <dbReference type="NCBI Taxonomy" id="262316"/>
    <lineage>
        <taxon>Bacteria</taxon>
        <taxon>Bacillati</taxon>
        <taxon>Actinomycetota</taxon>
        <taxon>Actinomycetes</taxon>
        <taxon>Mycobacteriales</taxon>
        <taxon>Mycobacteriaceae</taxon>
        <taxon>Mycobacterium</taxon>
        <taxon>Mycobacterium avium complex (MAC)</taxon>
    </lineage>
</organism>
<accession>Q73UI3</accession>
<keyword id="KW-0489">Methyltransferase</keyword>
<keyword id="KW-1185">Reference proteome</keyword>
<keyword id="KW-0949">S-adenosyl-L-methionine</keyword>
<keyword id="KW-0808">Transferase</keyword>
<dbReference type="EC" id="2.1.1.-"/>
<dbReference type="EMBL" id="AE016958">
    <property type="protein sequence ID" value="AAS05935.1"/>
    <property type="molecule type" value="Genomic_DNA"/>
</dbReference>
<dbReference type="RefSeq" id="WP_003874539.1">
    <property type="nucleotide sequence ID" value="NZ_CP106873.1"/>
</dbReference>
<dbReference type="SMR" id="Q73UI3"/>
<dbReference type="STRING" id="262316.MAP_3385"/>
<dbReference type="KEGG" id="mpa:MAP_3385"/>
<dbReference type="eggNOG" id="COG3315">
    <property type="taxonomic scope" value="Bacteria"/>
</dbReference>
<dbReference type="HOGENOM" id="CLU_056160_2_1_11"/>
<dbReference type="Proteomes" id="UP000000580">
    <property type="component" value="Chromosome"/>
</dbReference>
<dbReference type="GO" id="GO:0008168">
    <property type="term" value="F:methyltransferase activity"/>
    <property type="evidence" value="ECO:0007669"/>
    <property type="project" value="UniProtKB-KW"/>
</dbReference>
<dbReference type="GO" id="GO:0032259">
    <property type="term" value="P:methylation"/>
    <property type="evidence" value="ECO:0007669"/>
    <property type="project" value="UniProtKB-KW"/>
</dbReference>
<dbReference type="Gene3D" id="3.40.50.150">
    <property type="entry name" value="Vaccinia Virus protein VP39"/>
    <property type="match status" value="1"/>
</dbReference>
<dbReference type="InterPro" id="IPR007213">
    <property type="entry name" value="Ppm1/Ppm2/Tcmp"/>
</dbReference>
<dbReference type="InterPro" id="IPR029063">
    <property type="entry name" value="SAM-dependent_MTases_sf"/>
</dbReference>
<dbReference type="InterPro" id="IPR011610">
    <property type="entry name" value="SAM_mthyl_Trfase_ML2640-like"/>
</dbReference>
<dbReference type="NCBIfam" id="TIGR00027">
    <property type="entry name" value="mthyl_TIGR00027"/>
    <property type="match status" value="1"/>
</dbReference>
<dbReference type="PANTHER" id="PTHR43619">
    <property type="entry name" value="S-ADENOSYL-L-METHIONINE-DEPENDENT METHYLTRANSFERASE YKTD-RELATED"/>
    <property type="match status" value="1"/>
</dbReference>
<dbReference type="PANTHER" id="PTHR43619:SF2">
    <property type="entry name" value="S-ADENOSYL-L-METHIONINE-DEPENDENT METHYLTRANSFERASES SUPERFAMILY PROTEIN"/>
    <property type="match status" value="1"/>
</dbReference>
<dbReference type="Pfam" id="PF04072">
    <property type="entry name" value="LCM"/>
    <property type="match status" value="1"/>
</dbReference>
<dbReference type="SUPFAM" id="SSF53335">
    <property type="entry name" value="S-adenosyl-L-methionine-dependent methyltransferases"/>
    <property type="match status" value="1"/>
</dbReference>
<name>Y3385_MYCPA</name>
<reference key="1">
    <citation type="journal article" date="2005" name="Proc. Natl. Acad. Sci. U.S.A.">
        <title>The complete genome sequence of Mycobacterium avium subspecies paratuberculosis.</title>
        <authorList>
            <person name="Li L."/>
            <person name="Bannantine J.P."/>
            <person name="Zhang Q."/>
            <person name="Amonsin A."/>
            <person name="May B.J."/>
            <person name="Alt D."/>
            <person name="Banerji N."/>
            <person name="Kanjilal S."/>
            <person name="Kapur V."/>
        </authorList>
    </citation>
    <scope>NUCLEOTIDE SEQUENCE [LARGE SCALE GENOMIC DNA]</scope>
    <source>
        <strain>ATCC BAA-968 / K-10</strain>
    </source>
</reference>
<protein>
    <recommendedName>
        <fullName>Putative S-adenosyl-L-methionine-dependent methyltransferase MAP_3385</fullName>
        <ecNumber>2.1.1.-</ecNumber>
    </recommendedName>
</protein>
<sequence>MARTDDDTWDLATSVGATATMVAAGRARATRDGLIDDPFAEPLVRAVGVDFFTRWAAGELDAADVDVPGAAWGMQRMTDMLTARTRYIDAFFAEAGAAGIRQVVILASGLDARAYRLPWPAGTTVFEIDQPRVLEFKAATIAQLGAEPTAPVRAVAVDLRHDWPSALRQAGFDVGRPAAWAAEGLLGFLPPQAQDRLLDNVTALSADGSQLVAEVFANTGASGDALNAAGEKWRRHGLDVALDDLGFPGERNDPASYLQQLGWQPVRTPLNQMLANNGLPLQSTEPGAPFAQNYYCTAVLNKAG</sequence>
<evidence type="ECO:0000250" key="1"/>
<evidence type="ECO:0000305" key="2"/>